<reference evidence="7 8" key="1">
    <citation type="journal article" date="2008" name="Mol. Biol. Cell">
        <title>Caenorhabditis elegans mboa-7, a member of the MBOAT family, is required for selective incorporation of polyunsaturated fatty acids into phosphatidylinositol.</title>
        <authorList>
            <person name="Lee H.C."/>
            <person name="Inoue T."/>
            <person name="Imae R."/>
            <person name="Kono N."/>
            <person name="Shirae S."/>
            <person name="Matsuda S."/>
            <person name="Gengyo-Ando K."/>
            <person name="Mitani S."/>
            <person name="Arai H."/>
        </authorList>
    </citation>
    <scope>NUCLEOTIDE SEQUENCE [MRNA]</scope>
    <scope>FUNCTION</scope>
    <scope>CATALYTIC ACTIVITY</scope>
    <scope>PATHWAY</scope>
    <scope>TISSUE SPECIFICITY</scope>
    <scope>DISRUPTION PHENOTYPE</scope>
    <scope>MUTAGENESIS OF HIS-350</scope>
    <source>
        <strain evidence="8">Bristol N2</strain>
    </source>
</reference>
<reference evidence="9" key="2">
    <citation type="journal article" date="1998" name="Science">
        <title>Genome sequence of the nematode C. elegans: a platform for investigating biology.</title>
        <authorList>
            <consortium name="The C. elegans sequencing consortium"/>
        </authorList>
    </citation>
    <scope>NUCLEOTIDE SEQUENCE [LARGE SCALE GENOMIC DNA]</scope>
    <source>
        <strain evidence="9">Bristol N2</strain>
    </source>
</reference>
<reference key="3">
    <citation type="journal article" date="2012" name="Genes Cells">
        <title>Depletion of mboa-7, an enzyme that incorporates polyunsaturated fatty acids into phosphatidylinositol (PI), impairs PI 3-phosphate signaling in Caenorhabditis elegans.</title>
        <authorList>
            <person name="Lee H.C."/>
            <person name="Kubo T."/>
            <person name="Kono N."/>
            <person name="Kage-Nakadai E."/>
            <person name="Gengyo-Ando K."/>
            <person name="Mitani S."/>
            <person name="Inoue T."/>
            <person name="Arai H."/>
        </authorList>
    </citation>
    <scope>FUNCTION</scope>
    <scope>CATALYTIC ACTIVITY</scope>
    <scope>PATHWAY</scope>
</reference>
<comment type="function">
    <text evidence="3 4">Acyltransferase which mediates the conversion of lysophosphatidylinositol (1-acyl-sn-glycero-3-phosphatidylinositol or LPI) into phosphatidylinositol (1,2-diacyl-sn-glycero-3-phosphoinositol or PI) (LPIAT activity). Prefers sn-2-LPI rather than sn-1-LPI as the acyl acceptor. Lysophospholipid acyltransferases (LPLATs) catalyze the reacylation step of the phospholipid remodeling pathway also known as the Lands cycle. Involved in the selective incorporation of arachidonoyl-CoA ((5Z,8Z,11Z,14Z)-eicosatetraenoyl-CoA) and (5Z,8Z,11Z,14Z,17Z)-eicosapentaenoyl-CoA (EPA-CoA) into PI (PubMed:18094042). Besides its role in biomembranes, PI is a precursor of PI 3-phosphate (PIP3) and its fatty acid composition has an important role in PI3P signaling (PubMed:22862955).</text>
</comment>
<comment type="catalytic activity">
    <reaction evidence="3">
        <text>1-octadecanoyl-sn-glycero-3-phospho-(1D-myo-inositol) + (5Z,8Z,11Z,14Z,17Z)-eicosapentaenoyl-CoA = 1-octadecanoyl-2-(5Z,8Z,11Z,14Z,17Z-eicosapentaenoyl)-sn-glycero-3-phospho-(1D-myo-inositol) + CoA</text>
        <dbReference type="Rhea" id="RHEA:36839"/>
        <dbReference type="ChEBI" id="CHEBI:57287"/>
        <dbReference type="ChEBI" id="CHEBI:73862"/>
        <dbReference type="ChEBI" id="CHEBI:74243"/>
        <dbReference type="ChEBI" id="CHEBI:74245"/>
    </reaction>
    <physiologicalReaction direction="left-to-right" evidence="3">
        <dbReference type="Rhea" id="RHEA:36840"/>
    </physiologicalReaction>
</comment>
<comment type="catalytic activity">
    <reaction evidence="3">
        <text>a 1-acyl-sn-glycero-3-phospho-(1D-myo-inositol) + (5Z,8Z,11Z,14Z,17Z)-eicosapentaenoyl-CoA = a 1-acyl-2-(5Z,8Z,11Z,14Z,17Z-eicosapentaenoyl)-sn-glycero-3-phospho-(1D-myo-inositol) + CoA</text>
        <dbReference type="Rhea" id="RHEA:37011"/>
        <dbReference type="ChEBI" id="CHEBI:57287"/>
        <dbReference type="ChEBI" id="CHEBI:64771"/>
        <dbReference type="ChEBI" id="CHEBI:73862"/>
        <dbReference type="ChEBI" id="CHEBI:74335"/>
    </reaction>
    <physiologicalReaction direction="left-to-right" evidence="3">
        <dbReference type="Rhea" id="RHEA:37012"/>
    </physiologicalReaction>
</comment>
<comment type="catalytic activity">
    <reaction evidence="3 4">
        <text>a 1-acyl-sn-glycero-3-phospho-(1D-myo-inositol) + (5Z,8Z,11Z,14Z)-eicosatetraenoyl-CoA = a 1-acyl-2-(5Z,8Z,11Z,14Z-eicosatetraenoyl)-sn-glycero-3-phospho-(1D-myo-inositol) + CoA</text>
        <dbReference type="Rhea" id="RHEA:37015"/>
        <dbReference type="ChEBI" id="CHEBI:57287"/>
        <dbReference type="ChEBI" id="CHEBI:57368"/>
        <dbReference type="ChEBI" id="CHEBI:64771"/>
        <dbReference type="ChEBI" id="CHEBI:75243"/>
    </reaction>
    <physiologicalReaction direction="left-to-right" evidence="3 4">
        <dbReference type="Rhea" id="RHEA:37016"/>
    </physiologicalReaction>
</comment>
<comment type="pathway">
    <text evidence="3 4">Lipid metabolism; phospholipid metabolism.</text>
</comment>
<comment type="subcellular location">
    <subcellularLocation>
        <location evidence="2">Membrane</location>
        <topology evidence="2">Multi-pass membrane protein</topology>
    </subcellularLocation>
</comment>
<comment type="tissue specificity">
    <text evidence="3">Expressed ubiquitously throughout development from early embryo to larval and adult stages. In adults, strongly expressed in pharyngeal muscle, body wall muscle, vulval cells, distal tip cells, intestinal cells and spermatheca.</text>
</comment>
<comment type="disruption phenotype">
    <text evidence="3">Mutants show larval arrest at an early developmental stage and egg-laying defects; 14% of mutants accumulate unlaid eggs that hatched internally.</text>
</comment>
<comment type="similarity">
    <text evidence="2">Belongs to the membrane-bound acyltransferase family.</text>
</comment>
<dbReference type="EC" id="2.3.1.-" evidence="3 4"/>
<dbReference type="EMBL" id="EU016382">
    <property type="protein sequence ID" value="ABV66274.1"/>
    <property type="molecule type" value="mRNA"/>
</dbReference>
<dbReference type="EMBL" id="Z49937">
    <property type="protein sequence ID" value="CAA90185.2"/>
    <property type="molecule type" value="Genomic_DNA"/>
</dbReference>
<dbReference type="PIR" id="T20899">
    <property type="entry name" value="T20899"/>
</dbReference>
<dbReference type="RefSeq" id="NP_509760.2">
    <property type="nucleotide sequence ID" value="NM_077359.8"/>
</dbReference>
<dbReference type="SMR" id="Q19468"/>
<dbReference type="FunCoup" id="Q19468">
    <property type="interactions" value="2396"/>
</dbReference>
<dbReference type="STRING" id="6239.F14F3.3.1"/>
<dbReference type="SwissLipids" id="SLP:000000135"/>
<dbReference type="GlyCosmos" id="Q19468">
    <property type="glycosylation" value="1 site, No reported glycans"/>
</dbReference>
<dbReference type="PaxDb" id="6239-F14F3.3"/>
<dbReference type="PeptideAtlas" id="Q19468"/>
<dbReference type="EnsemblMetazoa" id="F14F3.3.1">
    <property type="protein sequence ID" value="F14F3.3.1"/>
    <property type="gene ID" value="WBGene00008806"/>
</dbReference>
<dbReference type="GeneID" id="181252"/>
<dbReference type="KEGG" id="cel:CELE_F14F3.3"/>
<dbReference type="UCSC" id="F14F3.3">
    <property type="organism name" value="c. elegans"/>
</dbReference>
<dbReference type="AGR" id="WB:WBGene00008806"/>
<dbReference type="CTD" id="181252"/>
<dbReference type="WormBase" id="F14F3.3">
    <property type="protein sequence ID" value="CE40384"/>
    <property type="gene ID" value="WBGene00008806"/>
    <property type="gene designation" value="mboa-7"/>
</dbReference>
<dbReference type="eggNOG" id="KOG2706">
    <property type="taxonomic scope" value="Eukaryota"/>
</dbReference>
<dbReference type="GeneTree" id="ENSGT01030000234564"/>
<dbReference type="HOGENOM" id="CLU_011340_1_1_1"/>
<dbReference type="InParanoid" id="Q19468"/>
<dbReference type="OMA" id="TNMIQML"/>
<dbReference type="OrthoDB" id="7663182at2759"/>
<dbReference type="PhylomeDB" id="Q19468"/>
<dbReference type="BRENDA" id="2.3.1.B46">
    <property type="organism ID" value="1045"/>
</dbReference>
<dbReference type="Reactome" id="R-CEL-1482922">
    <property type="pathway name" value="Acyl chain remodelling of PI"/>
</dbReference>
<dbReference type="UniPathway" id="UPA00085"/>
<dbReference type="PRO" id="PR:Q19468"/>
<dbReference type="Proteomes" id="UP000001940">
    <property type="component" value="Chromosome X"/>
</dbReference>
<dbReference type="Bgee" id="WBGene00008806">
    <property type="expression patterns" value="Expressed in pharyngeal muscle cell (C elegans) and 4 other cell types or tissues"/>
</dbReference>
<dbReference type="GO" id="GO:0043231">
    <property type="term" value="C:intracellular membrane-bounded organelle"/>
    <property type="evidence" value="ECO:0000314"/>
    <property type="project" value="WormBase"/>
</dbReference>
<dbReference type="GO" id="GO:0016020">
    <property type="term" value="C:membrane"/>
    <property type="evidence" value="ECO:0000318"/>
    <property type="project" value="GO_Central"/>
</dbReference>
<dbReference type="GO" id="GO:0044233">
    <property type="term" value="C:mitochondria-associated endoplasmic reticulum membrane contact site"/>
    <property type="evidence" value="ECO:0000318"/>
    <property type="project" value="GO_Central"/>
</dbReference>
<dbReference type="GO" id="GO:0071617">
    <property type="term" value="F:lysophospholipid acyltransferase activity"/>
    <property type="evidence" value="ECO:0000318"/>
    <property type="project" value="GO_Central"/>
</dbReference>
<dbReference type="GO" id="GO:0008374">
    <property type="term" value="F:O-acyltransferase activity"/>
    <property type="evidence" value="ECO:0000314"/>
    <property type="project" value="WormBase"/>
</dbReference>
<dbReference type="GO" id="GO:0018991">
    <property type="term" value="P:egg-laying behavior"/>
    <property type="evidence" value="ECO:0000315"/>
    <property type="project" value="WormBase"/>
</dbReference>
<dbReference type="GO" id="GO:0030258">
    <property type="term" value="P:lipid modification"/>
    <property type="evidence" value="ECO:0000318"/>
    <property type="project" value="GO_Central"/>
</dbReference>
<dbReference type="GO" id="GO:0035264">
    <property type="term" value="P:multicellular organism growth"/>
    <property type="evidence" value="ECO:0000316"/>
    <property type="project" value="WormBase"/>
</dbReference>
<dbReference type="GO" id="GO:0002119">
    <property type="term" value="P:nematode larval development"/>
    <property type="evidence" value="ECO:0000315"/>
    <property type="project" value="WormBase"/>
</dbReference>
<dbReference type="GO" id="GO:0006661">
    <property type="term" value="P:phosphatidylinositol biosynthetic process"/>
    <property type="evidence" value="ECO:0000314"/>
    <property type="project" value="WormBase"/>
</dbReference>
<dbReference type="InterPro" id="IPR049941">
    <property type="entry name" value="LPLAT_7/PORCN-like"/>
</dbReference>
<dbReference type="InterPro" id="IPR004299">
    <property type="entry name" value="MBOAT_fam"/>
</dbReference>
<dbReference type="PANTHER" id="PTHR13906:SF16">
    <property type="entry name" value="LYSOPHOSPHOLIPID ACYLTRANSFERASE 7"/>
    <property type="match status" value="1"/>
</dbReference>
<dbReference type="PANTHER" id="PTHR13906">
    <property type="entry name" value="PORCUPINE"/>
    <property type="match status" value="1"/>
</dbReference>
<dbReference type="Pfam" id="PF03062">
    <property type="entry name" value="MBOAT"/>
    <property type="match status" value="1"/>
</dbReference>
<proteinExistence type="evidence at protein level"/>
<gene>
    <name evidence="10" type="primary">mboa-7</name>
    <name evidence="8" type="synonym">lpiat</name>
    <name evidence="10" type="synonym">tag-289</name>
    <name type="ORF">F14F3.3</name>
</gene>
<accession>Q19468</accession>
<evidence type="ECO:0000250" key="1">
    <source>
        <dbReference type="UniProtKB" id="Q96N66"/>
    </source>
</evidence>
<evidence type="ECO:0000255" key="2"/>
<evidence type="ECO:0000269" key="3">
    <source>
    </source>
</evidence>
<evidence type="ECO:0000269" key="4">
    <source>
    </source>
</evidence>
<evidence type="ECO:0000303" key="5">
    <source>
    </source>
</evidence>
<evidence type="ECO:0000303" key="6">
    <source>
    </source>
</evidence>
<evidence type="ECO:0000305" key="7"/>
<evidence type="ECO:0000312" key="8">
    <source>
        <dbReference type="EMBL" id="ABV66274.1"/>
    </source>
</evidence>
<evidence type="ECO:0000312" key="9">
    <source>
        <dbReference type="EMBL" id="CAA90185.2"/>
    </source>
</evidence>
<evidence type="ECO:0000312" key="10">
    <source>
        <dbReference type="WormBase" id="F14F3.3"/>
    </source>
</evidence>
<sequence>MENILGLMSKDDWIYTGLLLFSFGASCYVRKIGNNILASGALGFAMSLFIIGPKIVYSLGICSIAISIQLLANKKSTPLYVFLTTFTYLMFVRFAHYILPVNEVASHTNVIQLIITLRIIGITFEENDAWVHKSDENPTKRYLTELPTILEKFAYFYHFCGLFTGPYYTYQMLIDSQNPILKSWDPTLEVKSRFVRLLWSVPVFVITNHYFPLDILRSDAIWEVSFFTRLVYAALIFVVFKTRVYSAWAIAESICVILGIGIYPAASNPKIIMGPTDLNAFDKLKTRENIEMSSDAIVNLDIPKVEFSDGFRDGMKAWNRSVQTWLALYVHSRVKVMRVETTMLVSAVWHGTYAGYFMSFGVVAMCAILEDVIFKLVPVDTETGVRPKWFRILYTHTIRCRGFEMLATGFLLKNAYDVHHFWSSIYYWLPLLCIPFYIYSAKISKPKKAQKSE</sequence>
<name>MBOA7_CAEEL</name>
<organism>
    <name type="scientific">Caenorhabditis elegans</name>
    <dbReference type="NCBI Taxonomy" id="6239"/>
    <lineage>
        <taxon>Eukaryota</taxon>
        <taxon>Metazoa</taxon>
        <taxon>Ecdysozoa</taxon>
        <taxon>Nematoda</taxon>
        <taxon>Chromadorea</taxon>
        <taxon>Rhabditida</taxon>
        <taxon>Rhabditina</taxon>
        <taxon>Rhabditomorpha</taxon>
        <taxon>Rhabditoidea</taxon>
        <taxon>Rhabditidae</taxon>
        <taxon>Peloderinae</taxon>
        <taxon>Caenorhabditis</taxon>
    </lineage>
</organism>
<feature type="chain" id="PRO_0000393937" description="Membrane-bound acylglycerophosphatidylinositol O-acyltransferase mboa-7">
    <location>
        <begin position="1"/>
        <end position="453"/>
    </location>
</feature>
<feature type="transmembrane region" description="Helical" evidence="2">
    <location>
        <begin position="4"/>
        <end position="24"/>
    </location>
</feature>
<feature type="transmembrane region" description="Helical" evidence="2">
    <location>
        <begin position="36"/>
        <end position="56"/>
    </location>
</feature>
<feature type="transmembrane region" description="Helical" evidence="2">
    <location>
        <begin position="79"/>
        <end position="99"/>
    </location>
</feature>
<feature type="transmembrane region" description="Helical" evidence="2">
    <location>
        <begin position="154"/>
        <end position="174"/>
    </location>
</feature>
<feature type="transmembrane region" description="Helical" evidence="2">
    <location>
        <begin position="195"/>
        <end position="215"/>
    </location>
</feature>
<feature type="transmembrane region" description="Helical" evidence="2">
    <location>
        <begin position="220"/>
        <end position="240"/>
    </location>
</feature>
<feature type="transmembrane region" description="Helical" evidence="2">
    <location>
        <begin position="244"/>
        <end position="264"/>
    </location>
</feature>
<feature type="transmembrane region" description="Helical" evidence="2">
    <location>
        <begin position="354"/>
        <end position="374"/>
    </location>
</feature>
<feature type="transmembrane region" description="Helical" evidence="2">
    <location>
        <begin position="421"/>
        <end position="441"/>
    </location>
</feature>
<feature type="active site" evidence="3">
    <location>
        <position position="350"/>
    </location>
</feature>
<feature type="glycosylation site" description="N-linked (GlcNAc...) asparagine" evidence="2">
    <location>
        <position position="319"/>
    </location>
</feature>
<feature type="mutagenesis site" description="Disrupts LPIAT activity." evidence="3">
    <original>H</original>
    <variation>A</variation>
    <location>
        <position position="350"/>
    </location>
</feature>
<protein>
    <recommendedName>
        <fullName evidence="1">Membrane-bound acylglycerophosphatidylinositol O-acyltransferase mboa-7</fullName>
        <ecNumber evidence="3 4">2.3.1.-</ecNumber>
    </recommendedName>
    <alternativeName>
        <fullName evidence="5">1-acylglycerophosphatidylinositol O-acyltransferase</fullName>
    </alternativeName>
    <alternativeName>
        <fullName evidence="8">Lysophosphatidylinositol acyltransferase</fullName>
        <shortName evidence="5">LPIAT</shortName>
        <shortName evidence="5">Lyso-PI acyltransferase</shortName>
    </alternativeName>
    <alternativeName>
        <fullName>Lysophospholipid acyltransferase 7</fullName>
        <shortName>LPLAT 7</shortName>
    </alternativeName>
    <alternativeName>
        <fullName evidence="5">Membrane-bound O-acyltransferase domain-containing protein 7</fullName>
        <shortName evidence="5 6">MBOA-7</shortName>
    </alternativeName>
</protein>
<keyword id="KW-0012">Acyltransferase</keyword>
<keyword id="KW-0325">Glycoprotein</keyword>
<keyword id="KW-0444">Lipid biosynthesis</keyword>
<keyword id="KW-0443">Lipid metabolism</keyword>
<keyword id="KW-0472">Membrane</keyword>
<keyword id="KW-0594">Phospholipid biosynthesis</keyword>
<keyword id="KW-1208">Phospholipid metabolism</keyword>
<keyword id="KW-1185">Reference proteome</keyword>
<keyword id="KW-0808">Transferase</keyword>
<keyword id="KW-0812">Transmembrane</keyword>
<keyword id="KW-1133">Transmembrane helix</keyword>